<reference key="1">
    <citation type="journal article" date="2005" name="Science">
        <title>The transcriptional landscape of the mammalian genome.</title>
        <authorList>
            <person name="Carninci P."/>
            <person name="Kasukawa T."/>
            <person name="Katayama S."/>
            <person name="Gough J."/>
            <person name="Frith M.C."/>
            <person name="Maeda N."/>
            <person name="Oyama R."/>
            <person name="Ravasi T."/>
            <person name="Lenhard B."/>
            <person name="Wells C."/>
            <person name="Kodzius R."/>
            <person name="Shimokawa K."/>
            <person name="Bajic V.B."/>
            <person name="Brenner S.E."/>
            <person name="Batalov S."/>
            <person name="Forrest A.R."/>
            <person name="Zavolan M."/>
            <person name="Davis M.J."/>
            <person name="Wilming L.G."/>
            <person name="Aidinis V."/>
            <person name="Allen J.E."/>
            <person name="Ambesi-Impiombato A."/>
            <person name="Apweiler R."/>
            <person name="Aturaliya R.N."/>
            <person name="Bailey T.L."/>
            <person name="Bansal M."/>
            <person name="Baxter L."/>
            <person name="Beisel K.W."/>
            <person name="Bersano T."/>
            <person name="Bono H."/>
            <person name="Chalk A.M."/>
            <person name="Chiu K.P."/>
            <person name="Choudhary V."/>
            <person name="Christoffels A."/>
            <person name="Clutterbuck D.R."/>
            <person name="Crowe M.L."/>
            <person name="Dalla E."/>
            <person name="Dalrymple B.P."/>
            <person name="de Bono B."/>
            <person name="Della Gatta G."/>
            <person name="di Bernardo D."/>
            <person name="Down T."/>
            <person name="Engstrom P."/>
            <person name="Fagiolini M."/>
            <person name="Faulkner G."/>
            <person name="Fletcher C.F."/>
            <person name="Fukushima T."/>
            <person name="Furuno M."/>
            <person name="Futaki S."/>
            <person name="Gariboldi M."/>
            <person name="Georgii-Hemming P."/>
            <person name="Gingeras T.R."/>
            <person name="Gojobori T."/>
            <person name="Green R.E."/>
            <person name="Gustincich S."/>
            <person name="Harbers M."/>
            <person name="Hayashi Y."/>
            <person name="Hensch T.K."/>
            <person name="Hirokawa N."/>
            <person name="Hill D."/>
            <person name="Huminiecki L."/>
            <person name="Iacono M."/>
            <person name="Ikeo K."/>
            <person name="Iwama A."/>
            <person name="Ishikawa T."/>
            <person name="Jakt M."/>
            <person name="Kanapin A."/>
            <person name="Katoh M."/>
            <person name="Kawasawa Y."/>
            <person name="Kelso J."/>
            <person name="Kitamura H."/>
            <person name="Kitano H."/>
            <person name="Kollias G."/>
            <person name="Krishnan S.P."/>
            <person name="Kruger A."/>
            <person name="Kummerfeld S.K."/>
            <person name="Kurochkin I.V."/>
            <person name="Lareau L.F."/>
            <person name="Lazarevic D."/>
            <person name="Lipovich L."/>
            <person name="Liu J."/>
            <person name="Liuni S."/>
            <person name="McWilliam S."/>
            <person name="Madan Babu M."/>
            <person name="Madera M."/>
            <person name="Marchionni L."/>
            <person name="Matsuda H."/>
            <person name="Matsuzawa S."/>
            <person name="Miki H."/>
            <person name="Mignone F."/>
            <person name="Miyake S."/>
            <person name="Morris K."/>
            <person name="Mottagui-Tabar S."/>
            <person name="Mulder N."/>
            <person name="Nakano N."/>
            <person name="Nakauchi H."/>
            <person name="Ng P."/>
            <person name="Nilsson R."/>
            <person name="Nishiguchi S."/>
            <person name="Nishikawa S."/>
            <person name="Nori F."/>
            <person name="Ohara O."/>
            <person name="Okazaki Y."/>
            <person name="Orlando V."/>
            <person name="Pang K.C."/>
            <person name="Pavan W.J."/>
            <person name="Pavesi G."/>
            <person name="Pesole G."/>
            <person name="Petrovsky N."/>
            <person name="Piazza S."/>
            <person name="Reed J."/>
            <person name="Reid J.F."/>
            <person name="Ring B.Z."/>
            <person name="Ringwald M."/>
            <person name="Rost B."/>
            <person name="Ruan Y."/>
            <person name="Salzberg S.L."/>
            <person name="Sandelin A."/>
            <person name="Schneider C."/>
            <person name="Schoenbach C."/>
            <person name="Sekiguchi K."/>
            <person name="Semple C.A."/>
            <person name="Seno S."/>
            <person name="Sessa L."/>
            <person name="Sheng Y."/>
            <person name="Shibata Y."/>
            <person name="Shimada H."/>
            <person name="Shimada K."/>
            <person name="Silva D."/>
            <person name="Sinclair B."/>
            <person name="Sperling S."/>
            <person name="Stupka E."/>
            <person name="Sugiura K."/>
            <person name="Sultana R."/>
            <person name="Takenaka Y."/>
            <person name="Taki K."/>
            <person name="Tammoja K."/>
            <person name="Tan S.L."/>
            <person name="Tang S."/>
            <person name="Taylor M.S."/>
            <person name="Tegner J."/>
            <person name="Teichmann S.A."/>
            <person name="Ueda H.R."/>
            <person name="van Nimwegen E."/>
            <person name="Verardo R."/>
            <person name="Wei C.L."/>
            <person name="Yagi K."/>
            <person name="Yamanishi H."/>
            <person name="Zabarovsky E."/>
            <person name="Zhu S."/>
            <person name="Zimmer A."/>
            <person name="Hide W."/>
            <person name="Bult C."/>
            <person name="Grimmond S.M."/>
            <person name="Teasdale R.D."/>
            <person name="Liu E.T."/>
            <person name="Brusic V."/>
            <person name="Quackenbush J."/>
            <person name="Wahlestedt C."/>
            <person name="Mattick J.S."/>
            <person name="Hume D.A."/>
            <person name="Kai C."/>
            <person name="Sasaki D."/>
            <person name="Tomaru Y."/>
            <person name="Fukuda S."/>
            <person name="Kanamori-Katayama M."/>
            <person name="Suzuki M."/>
            <person name="Aoki J."/>
            <person name="Arakawa T."/>
            <person name="Iida J."/>
            <person name="Imamura K."/>
            <person name="Itoh M."/>
            <person name="Kato T."/>
            <person name="Kawaji H."/>
            <person name="Kawagashira N."/>
            <person name="Kawashima T."/>
            <person name="Kojima M."/>
            <person name="Kondo S."/>
            <person name="Konno H."/>
            <person name="Nakano K."/>
            <person name="Ninomiya N."/>
            <person name="Nishio T."/>
            <person name="Okada M."/>
            <person name="Plessy C."/>
            <person name="Shibata K."/>
            <person name="Shiraki T."/>
            <person name="Suzuki S."/>
            <person name="Tagami M."/>
            <person name="Waki K."/>
            <person name="Watahiki A."/>
            <person name="Okamura-Oho Y."/>
            <person name="Suzuki H."/>
            <person name="Kawai J."/>
            <person name="Hayashizaki Y."/>
        </authorList>
    </citation>
    <scope>NUCLEOTIDE SEQUENCE [LARGE SCALE MRNA] (ISOFORM 2)</scope>
    <source>
        <strain>C57BL/6J</strain>
        <tissue>Cecum</tissue>
    </source>
</reference>
<reference key="2">
    <citation type="submission" date="1998-02" db="EMBL/GenBank/DDBJ databases">
        <title>Sequence of the mouse major histocompatibility class II region.</title>
        <authorList>
            <person name="Rowen L."/>
            <person name="Qin S."/>
            <person name="Loretz C."/>
            <person name="Mix L."/>
            <person name="Lasky S."/>
            <person name="Madan A."/>
            <person name="Hood L."/>
        </authorList>
    </citation>
    <scope>NUCLEOTIDE SEQUENCE [LARGE SCALE GENOMIC DNA]</scope>
    <source>
        <strain>129</strain>
    </source>
</reference>
<reference key="3">
    <citation type="journal article" date="2009" name="PLoS Biol.">
        <title>Lineage-specific biology revealed by a finished genome assembly of the mouse.</title>
        <authorList>
            <person name="Church D.M."/>
            <person name="Goodstadt L."/>
            <person name="Hillier L.W."/>
            <person name="Zody M.C."/>
            <person name="Goldstein S."/>
            <person name="She X."/>
            <person name="Bult C.J."/>
            <person name="Agarwala R."/>
            <person name="Cherry J.L."/>
            <person name="DiCuccio M."/>
            <person name="Hlavina W."/>
            <person name="Kapustin Y."/>
            <person name="Meric P."/>
            <person name="Maglott D."/>
            <person name="Birtle Z."/>
            <person name="Marques A.C."/>
            <person name="Graves T."/>
            <person name="Zhou S."/>
            <person name="Teague B."/>
            <person name="Potamousis K."/>
            <person name="Churas C."/>
            <person name="Place M."/>
            <person name="Herschleb J."/>
            <person name="Runnheim R."/>
            <person name="Forrest D."/>
            <person name="Amos-Landgraf J."/>
            <person name="Schwartz D.C."/>
            <person name="Cheng Z."/>
            <person name="Lindblad-Toh K."/>
            <person name="Eichler E.E."/>
            <person name="Ponting C.P."/>
        </authorList>
    </citation>
    <scope>NUCLEOTIDE SEQUENCE [LARGE SCALE GENOMIC DNA]</scope>
    <source>
        <strain>C57BL/6J</strain>
    </source>
</reference>
<reference key="4">
    <citation type="journal article" date="2006" name="J. Immunol.">
        <title>BTNL2, a butyrophilin-like molecule that functions to inhibit T cell activation.</title>
        <authorList>
            <person name="Nguyen T."/>
            <person name="Liu X.K."/>
            <person name="Zhang Y."/>
            <person name="Dong C."/>
        </authorList>
    </citation>
    <scope>FUNCTION</scope>
    <scope>TISSUE SPECIFICITY</scope>
</reference>
<reference key="5">
    <citation type="journal article" date="2007" name="J. Immunol.">
        <title>BTNL2, a butyrophilin/B7-like molecule, is a negative costimulatory molecule modulated in intestinal inflammation.</title>
        <authorList>
            <person name="Arnett H.A."/>
            <person name="Escobar S.S."/>
            <person name="Gonzalez-Suarez E."/>
            <person name="Budelsky A.L."/>
            <person name="Steffen L.A."/>
            <person name="Boiani N."/>
            <person name="Zhang M."/>
            <person name="Siu G."/>
            <person name="Brewer A.W."/>
            <person name="Viney J.L."/>
        </authorList>
    </citation>
    <scope>FUNCTION</scope>
    <scope>TISSUE SPECIFICITY</scope>
</reference>
<dbReference type="EMBL" id="AK136521">
    <property type="protein sequence ID" value="BAE23022.1"/>
    <property type="molecule type" value="mRNA"/>
</dbReference>
<dbReference type="EMBL" id="AF050157">
    <property type="protein sequence ID" value="AAC05288.1"/>
    <property type="status" value="ALT_SEQ"/>
    <property type="molecule type" value="Genomic_DNA"/>
</dbReference>
<dbReference type="EMBL" id="CR974457">
    <property type="protein sequence ID" value="CAO77746.1"/>
    <property type="molecule type" value="Genomic_DNA"/>
</dbReference>
<dbReference type="CCDS" id="CCDS37585.1">
    <molecule id="O70355-2"/>
</dbReference>
<dbReference type="RefSeq" id="NP_524574.1">
    <molecule id="O70355-2"/>
    <property type="nucleotide sequence ID" value="NM_079835.2"/>
</dbReference>
<dbReference type="PDB" id="6L7Z">
    <property type="method" value="NMR"/>
    <property type="chains" value="A=28-143"/>
</dbReference>
<dbReference type="PDBsum" id="6L7Z"/>
<dbReference type="SMR" id="O70355"/>
<dbReference type="FunCoup" id="O70355">
    <property type="interactions" value="303"/>
</dbReference>
<dbReference type="STRING" id="10090.ENSMUSP00000025198"/>
<dbReference type="GlyCosmos" id="O70355">
    <property type="glycosylation" value="4 sites, No reported glycans"/>
</dbReference>
<dbReference type="GlyGen" id="O70355">
    <property type="glycosylation" value="4 sites"/>
</dbReference>
<dbReference type="PhosphoSitePlus" id="O70355"/>
<dbReference type="PaxDb" id="10090-ENSMUSP00000025198"/>
<dbReference type="ProteomicsDB" id="265389">
    <molecule id="O70355-1"/>
</dbReference>
<dbReference type="ProteomicsDB" id="265390">
    <molecule id="O70355-2"/>
</dbReference>
<dbReference type="Antibodypedia" id="50239">
    <property type="antibodies" value="128 antibodies from 20 providers"/>
</dbReference>
<dbReference type="Ensembl" id="ENSMUST00000025198.15">
    <molecule id="O70355-2"/>
    <property type="protein sequence ID" value="ENSMUSP00000025198.8"/>
    <property type="gene ID" value="ENSMUSG00000024340.17"/>
</dbReference>
<dbReference type="GeneID" id="547431"/>
<dbReference type="KEGG" id="mmu:547431"/>
<dbReference type="UCSC" id="uc008ccl.1">
    <molecule id="O70355-2"/>
    <property type="organism name" value="mouse"/>
</dbReference>
<dbReference type="AGR" id="MGI:1859549"/>
<dbReference type="CTD" id="56244"/>
<dbReference type="MGI" id="MGI:1859549">
    <property type="gene designation" value="Btnl2"/>
</dbReference>
<dbReference type="VEuPathDB" id="HostDB:ENSMUSG00000024340"/>
<dbReference type="eggNOG" id="ENOG502QSRZ">
    <property type="taxonomic scope" value="Eukaryota"/>
</dbReference>
<dbReference type="GeneTree" id="ENSGT00940000162484"/>
<dbReference type="HOGENOM" id="CLU_032563_1_0_1"/>
<dbReference type="InParanoid" id="O70355"/>
<dbReference type="OMA" id="GEMQLMC"/>
<dbReference type="OrthoDB" id="74197at9989"/>
<dbReference type="PhylomeDB" id="O70355"/>
<dbReference type="TreeFam" id="TF331083"/>
<dbReference type="Reactome" id="R-MMU-8851680">
    <property type="pathway name" value="Butyrophilin (BTN) family interactions"/>
</dbReference>
<dbReference type="BioGRID-ORCS" id="547431">
    <property type="hits" value="1 hit in 77 CRISPR screens"/>
</dbReference>
<dbReference type="PRO" id="PR:O70355"/>
<dbReference type="Proteomes" id="UP000000589">
    <property type="component" value="Chromosome 17"/>
</dbReference>
<dbReference type="RNAct" id="O70355">
    <property type="molecule type" value="protein"/>
</dbReference>
<dbReference type="Bgee" id="ENSMUSG00000024340">
    <property type="expression patterns" value="Expressed in small intestine Peyer's patch and 24 other cell types or tissues"/>
</dbReference>
<dbReference type="ExpressionAtlas" id="O70355">
    <property type="expression patterns" value="baseline and differential"/>
</dbReference>
<dbReference type="GO" id="GO:0016020">
    <property type="term" value="C:membrane"/>
    <property type="evidence" value="ECO:0007669"/>
    <property type="project" value="UniProtKB-SubCell"/>
</dbReference>
<dbReference type="GO" id="GO:0005102">
    <property type="term" value="F:signaling receptor binding"/>
    <property type="evidence" value="ECO:0000314"/>
    <property type="project" value="MGI"/>
</dbReference>
<dbReference type="GO" id="GO:0050860">
    <property type="term" value="P:negative regulation of T cell receptor signaling pathway"/>
    <property type="evidence" value="ECO:0000315"/>
    <property type="project" value="MGI"/>
</dbReference>
<dbReference type="GO" id="GO:0032743">
    <property type="term" value="P:positive regulation of interleukin-2 production"/>
    <property type="evidence" value="ECO:0000315"/>
    <property type="project" value="MGI"/>
</dbReference>
<dbReference type="GO" id="GO:0042102">
    <property type="term" value="P:positive regulation of T cell proliferation"/>
    <property type="evidence" value="ECO:0000315"/>
    <property type="project" value="MGI"/>
</dbReference>
<dbReference type="CDD" id="cd05713">
    <property type="entry name" value="IgV_MOG_like"/>
    <property type="match status" value="1"/>
</dbReference>
<dbReference type="FunFam" id="2.60.40.10:FF:000088">
    <property type="entry name" value="Butyrophilin subfamily 1 member A1"/>
    <property type="match status" value="2"/>
</dbReference>
<dbReference type="FunFam" id="2.60.40.10:FF:000183">
    <property type="entry name" value="Myelin-oligodendrocyte glycoprotein"/>
    <property type="match status" value="2"/>
</dbReference>
<dbReference type="Gene3D" id="2.60.40.10">
    <property type="entry name" value="Immunoglobulins"/>
    <property type="match status" value="4"/>
</dbReference>
<dbReference type="InterPro" id="IPR053896">
    <property type="entry name" value="BTN3A2-like_Ig-C"/>
</dbReference>
<dbReference type="InterPro" id="IPR007110">
    <property type="entry name" value="Ig-like_dom"/>
</dbReference>
<dbReference type="InterPro" id="IPR036179">
    <property type="entry name" value="Ig-like_dom_sf"/>
</dbReference>
<dbReference type="InterPro" id="IPR013783">
    <property type="entry name" value="Ig-like_fold"/>
</dbReference>
<dbReference type="InterPro" id="IPR003599">
    <property type="entry name" value="Ig_sub"/>
</dbReference>
<dbReference type="InterPro" id="IPR003598">
    <property type="entry name" value="Ig_sub2"/>
</dbReference>
<dbReference type="InterPro" id="IPR013106">
    <property type="entry name" value="Ig_V-set"/>
</dbReference>
<dbReference type="InterPro" id="IPR050504">
    <property type="entry name" value="IgSF_BTN/MOG"/>
</dbReference>
<dbReference type="PANTHER" id="PTHR24100">
    <property type="entry name" value="BUTYROPHILIN"/>
    <property type="match status" value="1"/>
</dbReference>
<dbReference type="PANTHER" id="PTHR24100:SF105">
    <property type="entry name" value="BUTYROPHILIN-LIKE PROTEIN 2"/>
    <property type="match status" value="1"/>
</dbReference>
<dbReference type="Pfam" id="PF22705">
    <property type="entry name" value="C2-set_3"/>
    <property type="match status" value="2"/>
</dbReference>
<dbReference type="Pfam" id="PF07686">
    <property type="entry name" value="V-set"/>
    <property type="match status" value="2"/>
</dbReference>
<dbReference type="SMART" id="SM00409">
    <property type="entry name" value="IG"/>
    <property type="match status" value="2"/>
</dbReference>
<dbReference type="SMART" id="SM00408">
    <property type="entry name" value="IGc2"/>
    <property type="match status" value="2"/>
</dbReference>
<dbReference type="SMART" id="SM00406">
    <property type="entry name" value="IGv"/>
    <property type="match status" value="2"/>
</dbReference>
<dbReference type="SUPFAM" id="SSF48726">
    <property type="entry name" value="Immunoglobulin"/>
    <property type="match status" value="4"/>
</dbReference>
<dbReference type="PROSITE" id="PS50835">
    <property type="entry name" value="IG_LIKE"/>
    <property type="match status" value="4"/>
</dbReference>
<organism>
    <name type="scientific">Mus musculus</name>
    <name type="common">Mouse</name>
    <dbReference type="NCBI Taxonomy" id="10090"/>
    <lineage>
        <taxon>Eukaryota</taxon>
        <taxon>Metazoa</taxon>
        <taxon>Chordata</taxon>
        <taxon>Craniata</taxon>
        <taxon>Vertebrata</taxon>
        <taxon>Euteleostomi</taxon>
        <taxon>Mammalia</taxon>
        <taxon>Eutheria</taxon>
        <taxon>Euarchontoglires</taxon>
        <taxon>Glires</taxon>
        <taxon>Rodentia</taxon>
        <taxon>Myomorpha</taxon>
        <taxon>Muroidea</taxon>
        <taxon>Muridae</taxon>
        <taxon>Murinae</taxon>
        <taxon>Mus</taxon>
        <taxon>Mus</taxon>
    </lineage>
</organism>
<sequence>MVDCPRYSLSGVAASFLFVLLTIKHPDDFRVVGPNLPILAKVGEDALLTCQLLPKRTTAHMEVRWYRSDPDMPVIMYRDGAEVTGLPMEGYGGRAEWMEDSTEEGSVALKIRQVQPSDDGQYWCRFQEGDYWRETSVLLQVAALGSSPNIHVEGLGEGEVQLVCTSRGWFPEPEVHWEGIWGEKLMSFSENHVPGEDGLFYVEDTLMVRNDSVETISCFIYSHGLRETQEATIALSERLQTELASVSVIGHSQPSPVQVGENIELTCHLSPQTDAQNLEVRWLRSRYYPAVHVYANGTHVAGEQMVEYKGRTSLVTDAIHEGKLTLQIHNARTSDEGQYRCLFGKDGVYQEARVDVQVMAVGSTPRITREVLKDGGMQLRCTSDGWFPRPHVQWRDRDGKTMPSFSEAFQQGSQELFQVETLLLVTNGSMVNVTCSISLPLGQEKTARFPLSGW</sequence>
<keyword id="KW-0002">3D-structure</keyword>
<keyword id="KW-0025">Alternative splicing</keyword>
<keyword id="KW-1015">Disulfide bond</keyword>
<keyword id="KW-0325">Glycoprotein</keyword>
<keyword id="KW-0393">Immunoglobulin domain</keyword>
<keyword id="KW-0472">Membrane</keyword>
<keyword id="KW-1185">Reference proteome</keyword>
<keyword id="KW-0677">Repeat</keyword>
<keyword id="KW-0735">Signal-anchor</keyword>
<keyword id="KW-0812">Transmembrane</keyword>
<keyword id="KW-1133">Transmembrane helix</keyword>
<evidence type="ECO:0000250" key="1"/>
<evidence type="ECO:0000255" key="2"/>
<evidence type="ECO:0000255" key="3">
    <source>
        <dbReference type="PROSITE-ProRule" id="PRU00114"/>
    </source>
</evidence>
<evidence type="ECO:0000269" key="4">
    <source>
    </source>
</evidence>
<evidence type="ECO:0000269" key="5">
    <source>
    </source>
</evidence>
<evidence type="ECO:0000303" key="6">
    <source>
    </source>
</evidence>
<evidence type="ECO:0000305" key="7"/>
<evidence type="ECO:0000312" key="8">
    <source>
        <dbReference type="MGI" id="MGI:1859549"/>
    </source>
</evidence>
<evidence type="ECO:0007829" key="9">
    <source>
        <dbReference type="PDB" id="6L7Z"/>
    </source>
</evidence>
<gene>
    <name evidence="8" type="primary">Btnl2</name>
    <name type="synonym">Gm315</name>
    <name type="synonym">Ng9</name>
</gene>
<protein>
    <recommendedName>
        <fullName evidence="7">Butyrophilin-like protein 2</fullName>
    </recommendedName>
</protein>
<name>BTNL2_MOUSE</name>
<comment type="function">
    <text evidence="4 5">Negative regulator of T-cell proliferation.</text>
</comment>
<comment type="subcellular location">
    <subcellularLocation>
        <location evidence="1">Membrane</location>
        <topology evidence="1">Single-pass type II membrane protein</topology>
    </subcellularLocation>
</comment>
<comment type="alternative products">
    <event type="alternative splicing"/>
    <isoform>
        <id>O70355-1</id>
        <name>1</name>
        <sequence type="displayed"/>
    </isoform>
    <isoform>
        <id>O70355-2</id>
        <name>2</name>
        <sequence type="described" ref="VSP_022147"/>
    </isoform>
</comment>
<comment type="tissue specificity">
    <text evidence="4 5">Highly expressed in intestine and at reduced levels in lung and stomach. Also expressed in thymus, spleen, lymph nodes, T-cells, B-cells, and macrophages.</text>
</comment>
<comment type="similarity">
    <text evidence="7">Belongs to the immunoglobulin superfamily. BTN/MOG family.</text>
</comment>
<comment type="sequence caution" evidence="7">
    <conflict type="miscellaneous discrepancy">
        <sequence resource="EMBL-CDS" id="AAC05288"/>
    </conflict>
    <text>Erroneous gene model prediction.</text>
</comment>
<accession>O70355</accession>
<accession>A6X8K1</accession>
<accession>Q3UW94</accession>
<proteinExistence type="evidence at protein level"/>
<feature type="chain" id="PRO_0000014538" description="Butyrophilin-like protein 2">
    <location>
        <begin position="1"/>
        <end position="454"/>
    </location>
</feature>
<feature type="topological domain" description="Cytoplasmic" evidence="2">
    <location>
        <begin position="1"/>
        <end position="6"/>
    </location>
</feature>
<feature type="transmembrane region" description="Helical; Signal-anchor for type II membrane protein" evidence="2">
    <location>
        <begin position="7"/>
        <end position="23"/>
    </location>
</feature>
<feature type="topological domain" description="Extracellular" evidence="2">
    <location>
        <begin position="24"/>
        <end position="454"/>
    </location>
</feature>
<feature type="domain" description="Ig-like V-type 1">
    <location>
        <begin position="27"/>
        <end position="140"/>
    </location>
</feature>
<feature type="domain" description="Ig-like V-type 2">
    <location>
        <begin position="148"/>
        <end position="234"/>
    </location>
</feature>
<feature type="domain" description="Ig-like V-type 3">
    <location>
        <begin position="244"/>
        <end position="355"/>
    </location>
</feature>
<feature type="domain" description="Ig-like V-type 4">
    <location>
        <begin position="365"/>
        <end position="452"/>
    </location>
</feature>
<feature type="glycosylation site" description="N-linked (GlcNAc...) asparagine" evidence="2">
    <location>
        <position position="210"/>
    </location>
</feature>
<feature type="glycosylation site" description="N-linked (GlcNAc...) asparagine" evidence="2">
    <location>
        <position position="296"/>
    </location>
</feature>
<feature type="glycosylation site" description="N-linked (GlcNAc...) asparagine" evidence="2">
    <location>
        <position position="427"/>
    </location>
</feature>
<feature type="glycosylation site" description="N-linked (GlcNAc...) asparagine" evidence="2">
    <location>
        <position position="432"/>
    </location>
</feature>
<feature type="disulfide bond" evidence="3">
    <location>
        <begin position="50"/>
        <end position="124"/>
    </location>
</feature>
<feature type="disulfide bond" evidence="3">
    <location>
        <begin position="164"/>
        <end position="218"/>
    </location>
</feature>
<feature type="disulfide bond" evidence="3">
    <location>
        <begin position="267"/>
        <end position="341"/>
    </location>
</feature>
<feature type="disulfide bond" evidence="3">
    <location>
        <begin position="381"/>
        <end position="435"/>
    </location>
</feature>
<feature type="splice variant" id="VSP_022147" description="In isoform 2." evidence="6">
    <original>GW</original>
    <variation>DSKIALLWMTLPVVVLPLAMAIDLIKVKRWRRTNEQTHSSNQENNKNDENHRRRLPSDERLR</variation>
    <location>
        <begin position="453"/>
        <end position="454"/>
    </location>
</feature>
<feature type="strand" evidence="9">
    <location>
        <begin position="46"/>
        <end position="52"/>
    </location>
</feature>
<feature type="strand" evidence="9">
    <location>
        <begin position="62"/>
        <end position="65"/>
    </location>
</feature>
<feature type="strand" evidence="9">
    <location>
        <begin position="74"/>
        <end position="78"/>
    </location>
</feature>
<feature type="strand" evidence="9">
    <location>
        <begin position="86"/>
        <end position="88"/>
    </location>
</feature>
<feature type="helix" evidence="9">
    <location>
        <begin position="90"/>
        <end position="94"/>
    </location>
</feature>
<feature type="strand" evidence="9">
    <location>
        <begin position="95"/>
        <end position="97"/>
    </location>
</feature>
<feature type="strand" evidence="9">
    <location>
        <begin position="104"/>
        <end position="113"/>
    </location>
</feature>
<feature type="turn" evidence="9">
    <location>
        <begin position="116"/>
        <end position="118"/>
    </location>
</feature>
<feature type="strand" evidence="9">
    <location>
        <begin position="119"/>
        <end position="128"/>
    </location>
</feature>
<feature type="strand" evidence="9">
    <location>
        <begin position="131"/>
        <end position="139"/>
    </location>
</feature>